<evidence type="ECO:0000255" key="1">
    <source>
        <dbReference type="HAMAP-Rule" id="MF_00158"/>
    </source>
</evidence>
<organism>
    <name type="scientific">Neisseria meningitidis serogroup A / serotype 4A (strain DSM 15465 / Z2491)</name>
    <dbReference type="NCBI Taxonomy" id="122587"/>
    <lineage>
        <taxon>Bacteria</taxon>
        <taxon>Pseudomonadati</taxon>
        <taxon>Pseudomonadota</taxon>
        <taxon>Betaproteobacteria</taxon>
        <taxon>Neisseriales</taxon>
        <taxon>Neisseriaceae</taxon>
        <taxon>Neisseria</taxon>
    </lineage>
</organism>
<sequence>MQIIHTIQELRAWRKNAGTVAFVPTMGNLHEGHLALVREAKKRADNVVVSIFVNRLQFGQGEDFDKYPRTLQQDADKLEAEGVAVVFAPDEKELYPNVEQRYNVEPPNLQNELCGKFRPGHFLGVATVVSKLFNIVAPDVACFGKKDYQQLAVIKGLTEDLNFDVEIVPVDTGRAEDGLALSSRNQYLSAAERDEAPRLYRELKAVAESLAQGSLDYAGLEKRAVQSLTEYGWVVDYVEIRRVDTLEVARAGDKKLVVLAAARLGTTRLIDNLEIKLP</sequence>
<dbReference type="EC" id="6.3.2.1" evidence="1"/>
<dbReference type="EMBL" id="AL157959">
    <property type="protein sequence ID" value="CAM08300.1"/>
    <property type="molecule type" value="Genomic_DNA"/>
</dbReference>
<dbReference type="PIR" id="F81874">
    <property type="entry name" value="F81874"/>
</dbReference>
<dbReference type="RefSeq" id="WP_002229313.1">
    <property type="nucleotide sequence ID" value="NC_003116.1"/>
</dbReference>
<dbReference type="SMR" id="P57035"/>
<dbReference type="EnsemblBacteria" id="CAM08300">
    <property type="protein sequence ID" value="CAM08300"/>
    <property type="gene ID" value="NMA1089"/>
</dbReference>
<dbReference type="KEGG" id="nma:NMA1089"/>
<dbReference type="HOGENOM" id="CLU_047148_0_0_4"/>
<dbReference type="UniPathway" id="UPA00028">
    <property type="reaction ID" value="UER00005"/>
</dbReference>
<dbReference type="Proteomes" id="UP000000626">
    <property type="component" value="Chromosome"/>
</dbReference>
<dbReference type="GO" id="GO:0005829">
    <property type="term" value="C:cytosol"/>
    <property type="evidence" value="ECO:0007669"/>
    <property type="project" value="TreeGrafter"/>
</dbReference>
<dbReference type="GO" id="GO:0005524">
    <property type="term" value="F:ATP binding"/>
    <property type="evidence" value="ECO:0007669"/>
    <property type="project" value="UniProtKB-KW"/>
</dbReference>
<dbReference type="GO" id="GO:0004592">
    <property type="term" value="F:pantoate-beta-alanine ligase activity"/>
    <property type="evidence" value="ECO:0007669"/>
    <property type="project" value="UniProtKB-UniRule"/>
</dbReference>
<dbReference type="GO" id="GO:0015940">
    <property type="term" value="P:pantothenate biosynthetic process"/>
    <property type="evidence" value="ECO:0007669"/>
    <property type="project" value="UniProtKB-UniRule"/>
</dbReference>
<dbReference type="CDD" id="cd00560">
    <property type="entry name" value="PanC"/>
    <property type="match status" value="1"/>
</dbReference>
<dbReference type="FunFam" id="3.30.1300.10:FF:000001">
    <property type="entry name" value="Pantothenate synthetase"/>
    <property type="match status" value="1"/>
</dbReference>
<dbReference type="FunFam" id="3.40.50.620:FF:000013">
    <property type="entry name" value="Pantothenate synthetase"/>
    <property type="match status" value="1"/>
</dbReference>
<dbReference type="Gene3D" id="3.40.50.620">
    <property type="entry name" value="HUPs"/>
    <property type="match status" value="1"/>
</dbReference>
<dbReference type="Gene3D" id="3.30.1300.10">
    <property type="entry name" value="Pantoate-beta-alanine ligase, C-terminal domain"/>
    <property type="match status" value="1"/>
</dbReference>
<dbReference type="HAMAP" id="MF_00158">
    <property type="entry name" value="PanC"/>
    <property type="match status" value="1"/>
</dbReference>
<dbReference type="InterPro" id="IPR004821">
    <property type="entry name" value="Cyt_trans-like"/>
</dbReference>
<dbReference type="InterPro" id="IPR003721">
    <property type="entry name" value="Pantoate_ligase"/>
</dbReference>
<dbReference type="InterPro" id="IPR042176">
    <property type="entry name" value="Pantoate_ligase_C"/>
</dbReference>
<dbReference type="InterPro" id="IPR014729">
    <property type="entry name" value="Rossmann-like_a/b/a_fold"/>
</dbReference>
<dbReference type="NCBIfam" id="TIGR00125">
    <property type="entry name" value="cyt_tran_rel"/>
    <property type="match status" value="1"/>
</dbReference>
<dbReference type="NCBIfam" id="TIGR00018">
    <property type="entry name" value="panC"/>
    <property type="match status" value="1"/>
</dbReference>
<dbReference type="PANTHER" id="PTHR21299">
    <property type="entry name" value="CYTIDYLATE KINASE/PANTOATE-BETA-ALANINE LIGASE"/>
    <property type="match status" value="1"/>
</dbReference>
<dbReference type="PANTHER" id="PTHR21299:SF1">
    <property type="entry name" value="PANTOATE--BETA-ALANINE LIGASE"/>
    <property type="match status" value="1"/>
</dbReference>
<dbReference type="Pfam" id="PF02569">
    <property type="entry name" value="Pantoate_ligase"/>
    <property type="match status" value="1"/>
</dbReference>
<dbReference type="SUPFAM" id="SSF52374">
    <property type="entry name" value="Nucleotidylyl transferase"/>
    <property type="match status" value="1"/>
</dbReference>
<name>PANC_NEIMA</name>
<keyword id="KW-0067">ATP-binding</keyword>
<keyword id="KW-0963">Cytoplasm</keyword>
<keyword id="KW-0436">Ligase</keyword>
<keyword id="KW-0547">Nucleotide-binding</keyword>
<keyword id="KW-0566">Pantothenate biosynthesis</keyword>
<comment type="function">
    <text evidence="1">Catalyzes the condensation of pantoate with beta-alanine in an ATP-dependent reaction via a pantoyl-adenylate intermediate.</text>
</comment>
<comment type="catalytic activity">
    <reaction evidence="1">
        <text>(R)-pantoate + beta-alanine + ATP = (R)-pantothenate + AMP + diphosphate + H(+)</text>
        <dbReference type="Rhea" id="RHEA:10912"/>
        <dbReference type="ChEBI" id="CHEBI:15378"/>
        <dbReference type="ChEBI" id="CHEBI:15980"/>
        <dbReference type="ChEBI" id="CHEBI:29032"/>
        <dbReference type="ChEBI" id="CHEBI:30616"/>
        <dbReference type="ChEBI" id="CHEBI:33019"/>
        <dbReference type="ChEBI" id="CHEBI:57966"/>
        <dbReference type="ChEBI" id="CHEBI:456215"/>
        <dbReference type="EC" id="6.3.2.1"/>
    </reaction>
</comment>
<comment type="pathway">
    <text evidence="1">Cofactor biosynthesis; (R)-pantothenate biosynthesis; (R)-pantothenate from (R)-pantoate and beta-alanine: step 1/1.</text>
</comment>
<comment type="subunit">
    <text evidence="1">Homodimer.</text>
</comment>
<comment type="subcellular location">
    <subcellularLocation>
        <location evidence="1">Cytoplasm</location>
    </subcellularLocation>
</comment>
<comment type="miscellaneous">
    <text evidence="1">The reaction proceeds by a bi uni uni bi ping pong mechanism.</text>
</comment>
<comment type="similarity">
    <text evidence="1">Belongs to the pantothenate synthetase family.</text>
</comment>
<accession>P57035</accession>
<accession>A1IRB4</accession>
<gene>
    <name evidence="1" type="primary">panC</name>
    <name type="ordered locus">NMA1089</name>
</gene>
<feature type="chain" id="PRO_0000128247" description="Pantothenate synthetase">
    <location>
        <begin position="1"/>
        <end position="278"/>
    </location>
</feature>
<feature type="active site" description="Proton donor" evidence="1">
    <location>
        <position position="33"/>
    </location>
</feature>
<feature type="binding site" evidence="1">
    <location>
        <begin position="26"/>
        <end position="33"/>
    </location>
    <ligand>
        <name>ATP</name>
        <dbReference type="ChEBI" id="CHEBI:30616"/>
    </ligand>
</feature>
<feature type="binding site" evidence="1">
    <location>
        <position position="57"/>
    </location>
    <ligand>
        <name>(R)-pantoate</name>
        <dbReference type="ChEBI" id="CHEBI:15980"/>
    </ligand>
</feature>
<feature type="binding site" evidence="1">
    <location>
        <position position="57"/>
    </location>
    <ligand>
        <name>beta-alanine</name>
        <dbReference type="ChEBI" id="CHEBI:57966"/>
    </ligand>
</feature>
<feature type="binding site" evidence="1">
    <location>
        <begin position="144"/>
        <end position="147"/>
    </location>
    <ligand>
        <name>ATP</name>
        <dbReference type="ChEBI" id="CHEBI:30616"/>
    </ligand>
</feature>
<feature type="binding site" evidence="1">
    <location>
        <position position="150"/>
    </location>
    <ligand>
        <name>(R)-pantoate</name>
        <dbReference type="ChEBI" id="CHEBI:15980"/>
    </ligand>
</feature>
<feature type="binding site" evidence="1">
    <location>
        <position position="173"/>
    </location>
    <ligand>
        <name>ATP</name>
        <dbReference type="ChEBI" id="CHEBI:30616"/>
    </ligand>
</feature>
<feature type="binding site" evidence="1">
    <location>
        <begin position="181"/>
        <end position="184"/>
    </location>
    <ligand>
        <name>ATP</name>
        <dbReference type="ChEBI" id="CHEBI:30616"/>
    </ligand>
</feature>
<protein>
    <recommendedName>
        <fullName evidence="1">Pantothenate synthetase</fullName>
        <shortName evidence="1">PS</shortName>
        <ecNumber evidence="1">6.3.2.1</ecNumber>
    </recommendedName>
    <alternativeName>
        <fullName evidence="1">Pantoate--beta-alanine ligase</fullName>
    </alternativeName>
    <alternativeName>
        <fullName evidence="1">Pantoate-activating enzyme</fullName>
    </alternativeName>
</protein>
<proteinExistence type="inferred from homology"/>
<reference key="1">
    <citation type="journal article" date="2000" name="Nature">
        <title>Complete DNA sequence of a serogroup A strain of Neisseria meningitidis Z2491.</title>
        <authorList>
            <person name="Parkhill J."/>
            <person name="Achtman M."/>
            <person name="James K.D."/>
            <person name="Bentley S.D."/>
            <person name="Churcher C.M."/>
            <person name="Klee S.R."/>
            <person name="Morelli G."/>
            <person name="Basham D."/>
            <person name="Brown D."/>
            <person name="Chillingworth T."/>
            <person name="Davies R.M."/>
            <person name="Davis P."/>
            <person name="Devlin K."/>
            <person name="Feltwell T."/>
            <person name="Hamlin N."/>
            <person name="Holroyd S."/>
            <person name="Jagels K."/>
            <person name="Leather S."/>
            <person name="Moule S."/>
            <person name="Mungall K.L."/>
            <person name="Quail M.A."/>
            <person name="Rajandream M.A."/>
            <person name="Rutherford K.M."/>
            <person name="Simmonds M."/>
            <person name="Skelton J."/>
            <person name="Whitehead S."/>
            <person name="Spratt B.G."/>
            <person name="Barrell B.G."/>
        </authorList>
    </citation>
    <scope>NUCLEOTIDE SEQUENCE [LARGE SCALE GENOMIC DNA]</scope>
    <source>
        <strain>DSM 15465 / Z2491</strain>
    </source>
</reference>